<feature type="chain" id="PRO_1000014196" description="Small ribosomal subunit protein uS7">
    <location>
        <begin position="1"/>
        <end position="157"/>
    </location>
</feature>
<name>RS7_FRATO</name>
<comment type="function">
    <text evidence="1">One of the primary rRNA binding proteins, it binds directly to 16S rRNA where it nucleates assembly of the head domain of the 30S subunit. Is located at the subunit interface close to the decoding center, probably blocks exit of the E-site tRNA.</text>
</comment>
<comment type="subunit">
    <text evidence="1">Part of the 30S ribosomal subunit. Contacts proteins S9 and S11.</text>
</comment>
<comment type="similarity">
    <text evidence="1">Belongs to the universal ribosomal protein uS7 family.</text>
</comment>
<dbReference type="EMBL" id="CP000437">
    <property type="protein sequence ID" value="ABI82254.1"/>
    <property type="molecule type" value="Genomic_DNA"/>
</dbReference>
<dbReference type="RefSeq" id="WP_011648591.1">
    <property type="nucleotide sequence ID" value="NC_017463.1"/>
</dbReference>
<dbReference type="SMR" id="Q0BNT0"/>
<dbReference type="KEGG" id="fth:FTH_0228"/>
<dbReference type="GO" id="GO:0015935">
    <property type="term" value="C:small ribosomal subunit"/>
    <property type="evidence" value="ECO:0007669"/>
    <property type="project" value="InterPro"/>
</dbReference>
<dbReference type="GO" id="GO:0019843">
    <property type="term" value="F:rRNA binding"/>
    <property type="evidence" value="ECO:0007669"/>
    <property type="project" value="UniProtKB-UniRule"/>
</dbReference>
<dbReference type="GO" id="GO:0003735">
    <property type="term" value="F:structural constituent of ribosome"/>
    <property type="evidence" value="ECO:0007669"/>
    <property type="project" value="InterPro"/>
</dbReference>
<dbReference type="GO" id="GO:0000049">
    <property type="term" value="F:tRNA binding"/>
    <property type="evidence" value="ECO:0007669"/>
    <property type="project" value="UniProtKB-UniRule"/>
</dbReference>
<dbReference type="GO" id="GO:0006412">
    <property type="term" value="P:translation"/>
    <property type="evidence" value="ECO:0007669"/>
    <property type="project" value="UniProtKB-UniRule"/>
</dbReference>
<dbReference type="CDD" id="cd14869">
    <property type="entry name" value="uS7_Bacteria"/>
    <property type="match status" value="1"/>
</dbReference>
<dbReference type="FunFam" id="1.10.455.10:FF:000001">
    <property type="entry name" value="30S ribosomal protein S7"/>
    <property type="match status" value="1"/>
</dbReference>
<dbReference type="Gene3D" id="1.10.455.10">
    <property type="entry name" value="Ribosomal protein S7 domain"/>
    <property type="match status" value="1"/>
</dbReference>
<dbReference type="HAMAP" id="MF_00480_B">
    <property type="entry name" value="Ribosomal_uS7_B"/>
    <property type="match status" value="1"/>
</dbReference>
<dbReference type="InterPro" id="IPR000235">
    <property type="entry name" value="Ribosomal_uS7"/>
</dbReference>
<dbReference type="InterPro" id="IPR005717">
    <property type="entry name" value="Ribosomal_uS7_bac/org-type"/>
</dbReference>
<dbReference type="InterPro" id="IPR020606">
    <property type="entry name" value="Ribosomal_uS7_CS"/>
</dbReference>
<dbReference type="InterPro" id="IPR023798">
    <property type="entry name" value="Ribosomal_uS7_dom"/>
</dbReference>
<dbReference type="InterPro" id="IPR036823">
    <property type="entry name" value="Ribosomal_uS7_dom_sf"/>
</dbReference>
<dbReference type="NCBIfam" id="TIGR01029">
    <property type="entry name" value="rpsG_bact"/>
    <property type="match status" value="1"/>
</dbReference>
<dbReference type="PANTHER" id="PTHR11205">
    <property type="entry name" value="RIBOSOMAL PROTEIN S7"/>
    <property type="match status" value="1"/>
</dbReference>
<dbReference type="Pfam" id="PF00177">
    <property type="entry name" value="Ribosomal_S7"/>
    <property type="match status" value="1"/>
</dbReference>
<dbReference type="PIRSF" id="PIRSF002122">
    <property type="entry name" value="RPS7p_RPS7a_RPS5e_RPS7o"/>
    <property type="match status" value="1"/>
</dbReference>
<dbReference type="SUPFAM" id="SSF47973">
    <property type="entry name" value="Ribosomal protein S7"/>
    <property type="match status" value="1"/>
</dbReference>
<dbReference type="PROSITE" id="PS00052">
    <property type="entry name" value="RIBOSOMAL_S7"/>
    <property type="match status" value="1"/>
</dbReference>
<evidence type="ECO:0000255" key="1">
    <source>
        <dbReference type="HAMAP-Rule" id="MF_00480"/>
    </source>
</evidence>
<evidence type="ECO:0000305" key="2"/>
<reference key="1">
    <citation type="journal article" date="2006" name="J. Bacteriol.">
        <title>Chromosome rearrangement and diversification of Francisella tularensis revealed by the type B (OSU18) genome sequence.</title>
        <authorList>
            <person name="Petrosino J.F."/>
            <person name="Xiang Q."/>
            <person name="Karpathy S.E."/>
            <person name="Jiang H."/>
            <person name="Yerrapragada S."/>
            <person name="Liu Y."/>
            <person name="Gioia J."/>
            <person name="Hemphill L."/>
            <person name="Gonzalez A."/>
            <person name="Raghavan T.M."/>
            <person name="Uzman A."/>
            <person name="Fox G.E."/>
            <person name="Highlander S."/>
            <person name="Reichard M."/>
            <person name="Morton R.J."/>
            <person name="Clinkenbeard K.D."/>
            <person name="Weinstock G.M."/>
        </authorList>
    </citation>
    <scope>NUCLEOTIDE SEQUENCE [LARGE SCALE GENOMIC DNA]</scope>
    <source>
        <strain>OSU18</strain>
    </source>
</reference>
<proteinExistence type="inferred from homology"/>
<sequence length="157" mass="17822">MSRRNRAPKRDILPDPKYKSQVVAKFVNHIMLSGKKSIAEKIVYGAFDKIKAKDASANEVEVFEKALESVSPMVEVKSRRVGGATYQVPVEVRPERRQTLGMRWIIDAARKRKENTMGDRLAAEILEAVEGRGAAVKKREDTHKMAEANKAFAHFRW</sequence>
<keyword id="KW-0687">Ribonucleoprotein</keyword>
<keyword id="KW-0689">Ribosomal protein</keyword>
<keyword id="KW-0694">RNA-binding</keyword>
<keyword id="KW-0699">rRNA-binding</keyword>
<keyword id="KW-0820">tRNA-binding</keyword>
<organism>
    <name type="scientific">Francisella tularensis subsp. holarctica (strain OSU18)</name>
    <dbReference type="NCBI Taxonomy" id="393011"/>
    <lineage>
        <taxon>Bacteria</taxon>
        <taxon>Pseudomonadati</taxon>
        <taxon>Pseudomonadota</taxon>
        <taxon>Gammaproteobacteria</taxon>
        <taxon>Thiotrichales</taxon>
        <taxon>Francisellaceae</taxon>
        <taxon>Francisella</taxon>
    </lineage>
</organism>
<protein>
    <recommendedName>
        <fullName evidence="1">Small ribosomal subunit protein uS7</fullName>
    </recommendedName>
    <alternativeName>
        <fullName evidence="2">30S ribosomal protein S7</fullName>
    </alternativeName>
</protein>
<gene>
    <name evidence="1" type="primary">rpsG</name>
    <name type="ordered locus">FTH_0228</name>
</gene>
<accession>Q0BNT0</accession>